<protein>
    <recommendedName>
        <fullName evidence="1">Large ribosomal subunit protein bL34</fullName>
    </recommendedName>
    <alternativeName>
        <fullName evidence="2">50S ribosomal protein L34</fullName>
    </alternativeName>
</protein>
<dbReference type="EMBL" id="CP000030">
    <property type="protein sequence ID" value="AAV86793.1"/>
    <property type="molecule type" value="Genomic_DNA"/>
</dbReference>
<dbReference type="SMR" id="Q5PA87"/>
<dbReference type="KEGG" id="ama:AM880.5"/>
<dbReference type="HOGENOM" id="CLU_129938_2_0_5"/>
<dbReference type="GO" id="GO:1990904">
    <property type="term" value="C:ribonucleoprotein complex"/>
    <property type="evidence" value="ECO:0007669"/>
    <property type="project" value="UniProtKB-KW"/>
</dbReference>
<dbReference type="GO" id="GO:0005840">
    <property type="term" value="C:ribosome"/>
    <property type="evidence" value="ECO:0007669"/>
    <property type="project" value="UniProtKB-KW"/>
</dbReference>
<dbReference type="GO" id="GO:0003735">
    <property type="term" value="F:structural constituent of ribosome"/>
    <property type="evidence" value="ECO:0007669"/>
    <property type="project" value="InterPro"/>
</dbReference>
<dbReference type="GO" id="GO:0006412">
    <property type="term" value="P:translation"/>
    <property type="evidence" value="ECO:0007669"/>
    <property type="project" value="UniProtKB-UniRule"/>
</dbReference>
<dbReference type="FunFam" id="1.10.287.3980:FF:000001">
    <property type="entry name" value="Mitochondrial ribosomal protein L34"/>
    <property type="match status" value="1"/>
</dbReference>
<dbReference type="Gene3D" id="1.10.287.3980">
    <property type="match status" value="1"/>
</dbReference>
<dbReference type="HAMAP" id="MF_00391">
    <property type="entry name" value="Ribosomal_bL34"/>
    <property type="match status" value="1"/>
</dbReference>
<dbReference type="InterPro" id="IPR000271">
    <property type="entry name" value="Ribosomal_bL34"/>
</dbReference>
<dbReference type="InterPro" id="IPR020939">
    <property type="entry name" value="Ribosomal_bL34_CS"/>
</dbReference>
<dbReference type="NCBIfam" id="TIGR01030">
    <property type="entry name" value="rpmH_bact"/>
    <property type="match status" value="1"/>
</dbReference>
<dbReference type="PANTHER" id="PTHR14503:SF4">
    <property type="entry name" value="LARGE RIBOSOMAL SUBUNIT PROTEIN BL34M"/>
    <property type="match status" value="1"/>
</dbReference>
<dbReference type="PANTHER" id="PTHR14503">
    <property type="entry name" value="MITOCHONDRIAL RIBOSOMAL PROTEIN 34 FAMILY MEMBER"/>
    <property type="match status" value="1"/>
</dbReference>
<dbReference type="Pfam" id="PF00468">
    <property type="entry name" value="Ribosomal_L34"/>
    <property type="match status" value="1"/>
</dbReference>
<dbReference type="PROSITE" id="PS00784">
    <property type="entry name" value="RIBOSOMAL_L34"/>
    <property type="match status" value="1"/>
</dbReference>
<evidence type="ECO:0000255" key="1">
    <source>
        <dbReference type="HAMAP-Rule" id="MF_00391"/>
    </source>
</evidence>
<evidence type="ECO:0000305" key="2"/>
<organism>
    <name type="scientific">Anaplasma marginale (strain St. Maries)</name>
    <dbReference type="NCBI Taxonomy" id="234826"/>
    <lineage>
        <taxon>Bacteria</taxon>
        <taxon>Pseudomonadati</taxon>
        <taxon>Pseudomonadota</taxon>
        <taxon>Alphaproteobacteria</taxon>
        <taxon>Rickettsiales</taxon>
        <taxon>Anaplasmataceae</taxon>
        <taxon>Anaplasma</taxon>
    </lineage>
</organism>
<proteinExistence type="inferred from homology"/>
<feature type="chain" id="PRO_0000187333" description="Large ribosomal subunit protein bL34">
    <location>
        <begin position="1"/>
        <end position="44"/>
    </location>
</feature>
<gene>
    <name evidence="1" type="primary">rpmH</name>
    <name type="ordered locus">AM880.5</name>
</gene>
<name>RL34_ANAMM</name>
<reference key="1">
    <citation type="journal article" date="2005" name="Proc. Natl. Acad. Sci. U.S.A.">
        <title>Complete genome sequencing of Anaplasma marginale reveals that the surface is skewed to two superfamilies of outer membrane proteins.</title>
        <authorList>
            <person name="Brayton K.A."/>
            <person name="Kappmeyer L.S."/>
            <person name="Herndon D.R."/>
            <person name="Dark M.J."/>
            <person name="Tibbals D.L."/>
            <person name="Palmer G.H."/>
            <person name="McGuire T.C."/>
            <person name="Knowles D.P. Jr."/>
        </authorList>
    </citation>
    <scope>NUCLEOTIDE SEQUENCE [LARGE SCALE GENOMIC DNA]</scope>
    <source>
        <strain>St. Maries</strain>
    </source>
</reference>
<sequence length="44" mass="5413">MKRTFQPSRIVRKRRHGFRARMSTRWGRKILNRRRAKGRCLLCA</sequence>
<comment type="similarity">
    <text evidence="1">Belongs to the bacterial ribosomal protein bL34 family.</text>
</comment>
<keyword id="KW-0687">Ribonucleoprotein</keyword>
<keyword id="KW-0689">Ribosomal protein</keyword>
<accession>Q5PA87</accession>